<dbReference type="EC" id="2.7.8.13" evidence="1"/>
<dbReference type="EMBL" id="CP001138">
    <property type="protein sequence ID" value="ACH49444.1"/>
    <property type="molecule type" value="Genomic_DNA"/>
</dbReference>
<dbReference type="RefSeq" id="WP_000964138.1">
    <property type="nucleotide sequence ID" value="NC_011149.1"/>
</dbReference>
<dbReference type="SMR" id="B5F7W1"/>
<dbReference type="KEGG" id="sea:SeAg_B0142"/>
<dbReference type="HOGENOM" id="CLU_023982_0_0_6"/>
<dbReference type="UniPathway" id="UPA00219"/>
<dbReference type="Proteomes" id="UP000008819">
    <property type="component" value="Chromosome"/>
</dbReference>
<dbReference type="GO" id="GO:0005886">
    <property type="term" value="C:plasma membrane"/>
    <property type="evidence" value="ECO:0007669"/>
    <property type="project" value="UniProtKB-SubCell"/>
</dbReference>
<dbReference type="GO" id="GO:0046872">
    <property type="term" value="F:metal ion binding"/>
    <property type="evidence" value="ECO:0007669"/>
    <property type="project" value="UniProtKB-KW"/>
</dbReference>
<dbReference type="GO" id="GO:0008963">
    <property type="term" value="F:phospho-N-acetylmuramoyl-pentapeptide-transferase activity"/>
    <property type="evidence" value="ECO:0007669"/>
    <property type="project" value="UniProtKB-UniRule"/>
</dbReference>
<dbReference type="GO" id="GO:0051992">
    <property type="term" value="F:UDP-N-acetylmuramoyl-L-alanyl-D-glutamyl-meso-2,6-diaminopimelyl-D-alanyl-D-alanine:undecaprenyl-phosphate transferase activity"/>
    <property type="evidence" value="ECO:0007669"/>
    <property type="project" value="RHEA"/>
</dbReference>
<dbReference type="GO" id="GO:0051301">
    <property type="term" value="P:cell division"/>
    <property type="evidence" value="ECO:0007669"/>
    <property type="project" value="UniProtKB-KW"/>
</dbReference>
<dbReference type="GO" id="GO:0071555">
    <property type="term" value="P:cell wall organization"/>
    <property type="evidence" value="ECO:0007669"/>
    <property type="project" value="UniProtKB-KW"/>
</dbReference>
<dbReference type="GO" id="GO:0009252">
    <property type="term" value="P:peptidoglycan biosynthetic process"/>
    <property type="evidence" value="ECO:0007669"/>
    <property type="project" value="UniProtKB-UniRule"/>
</dbReference>
<dbReference type="GO" id="GO:0008360">
    <property type="term" value="P:regulation of cell shape"/>
    <property type="evidence" value="ECO:0007669"/>
    <property type="project" value="UniProtKB-KW"/>
</dbReference>
<dbReference type="CDD" id="cd06852">
    <property type="entry name" value="GT_MraY"/>
    <property type="match status" value="1"/>
</dbReference>
<dbReference type="HAMAP" id="MF_00038">
    <property type="entry name" value="MraY"/>
    <property type="match status" value="1"/>
</dbReference>
<dbReference type="InterPro" id="IPR000715">
    <property type="entry name" value="Glycosyl_transferase_4"/>
</dbReference>
<dbReference type="InterPro" id="IPR003524">
    <property type="entry name" value="PNAcMuramoyl-5peptid_Trfase"/>
</dbReference>
<dbReference type="InterPro" id="IPR018480">
    <property type="entry name" value="PNAcMuramoyl-5peptid_Trfase_CS"/>
</dbReference>
<dbReference type="NCBIfam" id="TIGR00445">
    <property type="entry name" value="mraY"/>
    <property type="match status" value="1"/>
</dbReference>
<dbReference type="PANTHER" id="PTHR22926">
    <property type="entry name" value="PHOSPHO-N-ACETYLMURAMOYL-PENTAPEPTIDE-TRANSFERASE"/>
    <property type="match status" value="1"/>
</dbReference>
<dbReference type="PANTHER" id="PTHR22926:SF5">
    <property type="entry name" value="PHOSPHO-N-ACETYLMURAMOYL-PENTAPEPTIDE-TRANSFERASE HOMOLOG"/>
    <property type="match status" value="1"/>
</dbReference>
<dbReference type="Pfam" id="PF00953">
    <property type="entry name" value="Glycos_transf_4"/>
    <property type="match status" value="1"/>
</dbReference>
<dbReference type="Pfam" id="PF10555">
    <property type="entry name" value="MraY_sig1"/>
    <property type="match status" value="1"/>
</dbReference>
<dbReference type="PROSITE" id="PS01347">
    <property type="entry name" value="MRAY_1"/>
    <property type="match status" value="1"/>
</dbReference>
<dbReference type="PROSITE" id="PS01348">
    <property type="entry name" value="MRAY_2"/>
    <property type="match status" value="1"/>
</dbReference>
<reference key="1">
    <citation type="journal article" date="2011" name="J. Bacteriol.">
        <title>Comparative genomics of 28 Salmonella enterica isolates: evidence for CRISPR-mediated adaptive sublineage evolution.</title>
        <authorList>
            <person name="Fricke W.F."/>
            <person name="Mammel M.K."/>
            <person name="McDermott P.F."/>
            <person name="Tartera C."/>
            <person name="White D.G."/>
            <person name="Leclerc J.E."/>
            <person name="Ravel J."/>
            <person name="Cebula T.A."/>
        </authorList>
    </citation>
    <scope>NUCLEOTIDE SEQUENCE [LARGE SCALE GENOMIC DNA]</scope>
    <source>
        <strain>SL483</strain>
    </source>
</reference>
<name>MRAY_SALA4</name>
<organism>
    <name type="scientific">Salmonella agona (strain SL483)</name>
    <dbReference type="NCBI Taxonomy" id="454166"/>
    <lineage>
        <taxon>Bacteria</taxon>
        <taxon>Pseudomonadati</taxon>
        <taxon>Pseudomonadota</taxon>
        <taxon>Gammaproteobacteria</taxon>
        <taxon>Enterobacterales</taxon>
        <taxon>Enterobacteriaceae</taxon>
        <taxon>Salmonella</taxon>
    </lineage>
</organism>
<proteinExistence type="inferred from homology"/>
<accession>B5F7W1</accession>
<protein>
    <recommendedName>
        <fullName evidence="1">Phospho-N-acetylmuramoyl-pentapeptide-transferase</fullName>
        <ecNumber evidence="1">2.7.8.13</ecNumber>
    </recommendedName>
    <alternativeName>
        <fullName evidence="1">UDP-MurNAc-pentapeptide phosphotransferase</fullName>
    </alternativeName>
</protein>
<gene>
    <name evidence="1" type="primary">mraY</name>
    <name type="ordered locus">SeAg_B0142</name>
</gene>
<keyword id="KW-0131">Cell cycle</keyword>
<keyword id="KW-0132">Cell division</keyword>
<keyword id="KW-0997">Cell inner membrane</keyword>
<keyword id="KW-1003">Cell membrane</keyword>
<keyword id="KW-0133">Cell shape</keyword>
<keyword id="KW-0961">Cell wall biogenesis/degradation</keyword>
<keyword id="KW-0460">Magnesium</keyword>
<keyword id="KW-0472">Membrane</keyword>
<keyword id="KW-0479">Metal-binding</keyword>
<keyword id="KW-0573">Peptidoglycan synthesis</keyword>
<keyword id="KW-0808">Transferase</keyword>
<keyword id="KW-0812">Transmembrane</keyword>
<keyword id="KW-1133">Transmembrane helix</keyword>
<evidence type="ECO:0000255" key="1">
    <source>
        <dbReference type="HAMAP-Rule" id="MF_00038"/>
    </source>
</evidence>
<comment type="function">
    <text evidence="1">Catalyzes the initial step of the lipid cycle reactions in the biosynthesis of the cell wall peptidoglycan: transfers peptidoglycan precursor phospho-MurNAc-pentapeptide from UDP-MurNAc-pentapeptide onto the lipid carrier undecaprenyl phosphate, yielding undecaprenyl-pyrophosphoryl-MurNAc-pentapeptide, known as lipid I.</text>
</comment>
<comment type="catalytic activity">
    <reaction evidence="1">
        <text>UDP-N-acetyl-alpha-D-muramoyl-L-alanyl-gamma-D-glutamyl-meso-2,6-diaminopimeloyl-D-alanyl-D-alanine + di-trans,octa-cis-undecaprenyl phosphate = di-trans,octa-cis-undecaprenyl diphospho-N-acetyl-alpha-D-muramoyl-L-alanyl-D-glutamyl-meso-2,6-diaminopimeloyl-D-alanyl-D-alanine + UMP</text>
        <dbReference type="Rhea" id="RHEA:28386"/>
        <dbReference type="ChEBI" id="CHEBI:57865"/>
        <dbReference type="ChEBI" id="CHEBI:60392"/>
        <dbReference type="ChEBI" id="CHEBI:61386"/>
        <dbReference type="ChEBI" id="CHEBI:61387"/>
        <dbReference type="EC" id="2.7.8.13"/>
    </reaction>
</comment>
<comment type="cofactor">
    <cofactor evidence="1">
        <name>Mg(2+)</name>
        <dbReference type="ChEBI" id="CHEBI:18420"/>
    </cofactor>
</comment>
<comment type="pathway">
    <text evidence="1">Cell wall biogenesis; peptidoglycan biosynthesis.</text>
</comment>
<comment type="subcellular location">
    <subcellularLocation>
        <location evidence="1">Cell inner membrane</location>
        <topology evidence="1">Multi-pass membrane protein</topology>
    </subcellularLocation>
</comment>
<comment type="similarity">
    <text evidence="1">Belongs to the glycosyltransferase 4 family. MraY subfamily.</text>
</comment>
<feature type="chain" id="PRO_1000090664" description="Phospho-N-acetylmuramoyl-pentapeptide-transferase">
    <location>
        <begin position="1"/>
        <end position="360"/>
    </location>
</feature>
<feature type="topological domain" description="Periplasmic" evidence="1">
    <location>
        <begin position="1"/>
        <end position="25"/>
    </location>
</feature>
<feature type="transmembrane region" description="Helical" evidence="1">
    <location>
        <begin position="26"/>
        <end position="46"/>
    </location>
</feature>
<feature type="topological domain" description="Cytoplasmic" evidence="1">
    <location>
        <begin position="47"/>
        <end position="71"/>
    </location>
</feature>
<feature type="transmembrane region" description="Helical" evidence="1">
    <location>
        <begin position="72"/>
        <end position="92"/>
    </location>
</feature>
<feature type="topological domain" description="Periplasmic" evidence="1">
    <location>
        <position position="93"/>
    </location>
</feature>
<feature type="transmembrane region" description="Helical" evidence="1">
    <location>
        <begin position="94"/>
        <end position="114"/>
    </location>
</feature>
<feature type="topological domain" description="Cytoplasmic" evidence="1">
    <location>
        <begin position="115"/>
        <end position="131"/>
    </location>
</feature>
<feature type="transmembrane region" description="Helical" evidence="1">
    <location>
        <begin position="132"/>
        <end position="152"/>
    </location>
</feature>
<feature type="topological domain" description="Periplasmic" evidence="1">
    <location>
        <begin position="153"/>
        <end position="167"/>
    </location>
</feature>
<feature type="transmembrane region" description="Helical" evidence="1">
    <location>
        <begin position="168"/>
        <end position="188"/>
    </location>
</feature>
<feature type="topological domain" description="Cytoplasmic" evidence="1">
    <location>
        <begin position="189"/>
        <end position="198"/>
    </location>
</feature>
<feature type="transmembrane region" description="Helical" evidence="1">
    <location>
        <begin position="199"/>
        <end position="219"/>
    </location>
</feature>
<feature type="topological domain" description="Periplasmic" evidence="1">
    <location>
        <begin position="220"/>
        <end position="235"/>
    </location>
</feature>
<feature type="transmembrane region" description="Helical" evidence="1">
    <location>
        <begin position="236"/>
        <end position="256"/>
    </location>
</feature>
<feature type="topological domain" description="Cytoplasmic" evidence="1">
    <location>
        <begin position="257"/>
        <end position="262"/>
    </location>
</feature>
<feature type="transmembrane region" description="Helical" evidence="1">
    <location>
        <begin position="263"/>
        <end position="283"/>
    </location>
</feature>
<feature type="topological domain" description="Periplasmic" evidence="1">
    <location>
        <begin position="284"/>
        <end position="287"/>
    </location>
</feature>
<feature type="transmembrane region" description="Helical" evidence="1">
    <location>
        <begin position="288"/>
        <end position="308"/>
    </location>
</feature>
<feature type="topological domain" description="Cytoplasmic" evidence="1">
    <location>
        <begin position="309"/>
        <end position="337"/>
    </location>
</feature>
<feature type="transmembrane region" description="Helical" evidence="1">
    <location>
        <begin position="338"/>
        <end position="358"/>
    </location>
</feature>
<feature type="topological domain" description="Periplasmic" evidence="1">
    <location>
        <begin position="359"/>
        <end position="360"/>
    </location>
</feature>
<sequence>MLVWLAEHLVKYYSGFNVFSYLTFRAIVSLLTALFISLWMGPRMIARLQKLSFGQVVRNDGPESHFSKRGTPTMGGIMILTAIVISVLLWAYPSNPYVWCVLVVLIGYGIIGFVDDYRKVVRKDTKGLIARWKYFWMSVIALGVAFALYLVGKDTPATQLVVPFFKDVMPQLGLFYILLSYFVIVGTGNAVNLTDGLDGLAIMPTVFVAAGFALVAWATGNMNFANYLHIPYLRHAGELVIVCTAIVGAGLGFLWFNTYPAQVFMGDVGSLALGGALGIIAVLLRQEFLLVIMGGVFVVETLSVILQVGSFKLRGQRIFRMAPIHHHYELKGWPEPRVIVRFWIISLMLVLIGLATLKVR</sequence>